<name>CPNE8_HUMAN</name>
<dbReference type="EMBL" id="AY177785">
    <property type="protein sequence ID" value="AAO21123.1"/>
    <property type="molecule type" value="mRNA"/>
</dbReference>
<dbReference type="EMBL" id="AK094998">
    <property type="protein sequence ID" value="BAG52968.1"/>
    <property type="molecule type" value="mRNA"/>
</dbReference>
<dbReference type="EMBL" id="AC023795">
    <property type="status" value="NOT_ANNOTATED_CDS"/>
    <property type="molecule type" value="Genomic_DNA"/>
</dbReference>
<dbReference type="EMBL" id="AC067735">
    <property type="status" value="NOT_ANNOTATED_CDS"/>
    <property type="molecule type" value="Genomic_DNA"/>
</dbReference>
<dbReference type="EMBL" id="AC069442">
    <property type="status" value="NOT_ANNOTATED_CDS"/>
    <property type="molecule type" value="Genomic_DNA"/>
</dbReference>
<dbReference type="EMBL" id="AC087897">
    <property type="status" value="NOT_ANNOTATED_CDS"/>
    <property type="molecule type" value="Genomic_DNA"/>
</dbReference>
<dbReference type="EMBL" id="BC046366">
    <property type="protein sequence ID" value="AAH46366.1"/>
    <property type="molecule type" value="mRNA"/>
</dbReference>
<dbReference type="EMBL" id="BC110577">
    <property type="protein sequence ID" value="AAI10578.1"/>
    <property type="molecule type" value="mRNA"/>
</dbReference>
<dbReference type="EMBL" id="BC110578">
    <property type="protein sequence ID" value="AAI10579.1"/>
    <property type="molecule type" value="mRNA"/>
</dbReference>
<dbReference type="CCDS" id="CCDS8733.1">
    <molecule id="Q86YQ8-1"/>
</dbReference>
<dbReference type="RefSeq" id="NP_705898.1">
    <molecule id="Q86YQ8-1"/>
    <property type="nucleotide sequence ID" value="NM_153634.3"/>
</dbReference>
<dbReference type="RefSeq" id="XP_016874340.1">
    <property type="nucleotide sequence ID" value="XM_017018851.1"/>
</dbReference>
<dbReference type="SMR" id="Q86YQ8"/>
<dbReference type="BioGRID" id="126848">
    <property type="interactions" value="149"/>
</dbReference>
<dbReference type="FunCoup" id="Q86YQ8">
    <property type="interactions" value="496"/>
</dbReference>
<dbReference type="IntAct" id="Q86YQ8">
    <property type="interactions" value="35"/>
</dbReference>
<dbReference type="MINT" id="Q86YQ8"/>
<dbReference type="STRING" id="9606.ENSP00000329748"/>
<dbReference type="GlyGen" id="Q86YQ8">
    <property type="glycosylation" value="2 sites, 3 N-linked glycans (2 sites)"/>
</dbReference>
<dbReference type="iPTMnet" id="Q86YQ8"/>
<dbReference type="PhosphoSitePlus" id="Q86YQ8"/>
<dbReference type="SwissPalm" id="Q86YQ8"/>
<dbReference type="BioMuta" id="CPNE8"/>
<dbReference type="DMDM" id="115502379"/>
<dbReference type="jPOST" id="Q86YQ8"/>
<dbReference type="MassIVE" id="Q86YQ8"/>
<dbReference type="PaxDb" id="9606-ENSP00000329748"/>
<dbReference type="PeptideAtlas" id="Q86YQ8"/>
<dbReference type="ProteomicsDB" id="70089"/>
<dbReference type="ProteomicsDB" id="70451">
    <molecule id="Q86YQ8-1"/>
</dbReference>
<dbReference type="Pumba" id="Q86YQ8"/>
<dbReference type="Antibodypedia" id="42502">
    <property type="antibodies" value="140 antibodies from 24 providers"/>
</dbReference>
<dbReference type="DNASU" id="144402"/>
<dbReference type="Ensembl" id="ENST00000331366.10">
    <molecule id="Q86YQ8-1"/>
    <property type="protein sequence ID" value="ENSP00000329748.5"/>
    <property type="gene ID" value="ENSG00000139117.14"/>
</dbReference>
<dbReference type="Ensembl" id="ENST00000538596.6">
    <molecule id="Q86YQ8-2"/>
    <property type="protein sequence ID" value="ENSP00000439237.2"/>
    <property type="gene ID" value="ENSG00000139117.14"/>
</dbReference>
<dbReference type="GeneID" id="144402"/>
<dbReference type="KEGG" id="hsa:144402"/>
<dbReference type="MANE-Select" id="ENST00000331366.10">
    <property type="protein sequence ID" value="ENSP00000329748.5"/>
    <property type="RefSeq nucleotide sequence ID" value="NM_153634.3"/>
    <property type="RefSeq protein sequence ID" value="NP_705898.1"/>
</dbReference>
<dbReference type="UCSC" id="uc001rls.2">
    <molecule id="Q86YQ8-1"/>
    <property type="organism name" value="human"/>
</dbReference>
<dbReference type="AGR" id="HGNC:23498"/>
<dbReference type="CTD" id="144402"/>
<dbReference type="DisGeNET" id="144402"/>
<dbReference type="GeneCards" id="CPNE8"/>
<dbReference type="HGNC" id="HGNC:23498">
    <property type="gene designation" value="CPNE8"/>
</dbReference>
<dbReference type="HPA" id="ENSG00000139117">
    <property type="expression patterns" value="Low tissue specificity"/>
</dbReference>
<dbReference type="neXtProt" id="NX_Q86YQ8"/>
<dbReference type="OpenTargets" id="ENSG00000139117"/>
<dbReference type="PharmGKB" id="PA134980029"/>
<dbReference type="VEuPathDB" id="HostDB:ENSG00000139117"/>
<dbReference type="eggNOG" id="KOG1327">
    <property type="taxonomic scope" value="Eukaryota"/>
</dbReference>
<dbReference type="GeneTree" id="ENSGT00940000159679"/>
<dbReference type="HOGENOM" id="CLU_020452_3_2_1"/>
<dbReference type="InParanoid" id="Q86YQ8"/>
<dbReference type="OMA" id="LMILVYF"/>
<dbReference type="OrthoDB" id="5855668at2759"/>
<dbReference type="PAN-GO" id="Q86YQ8">
    <property type="GO annotations" value="3 GO annotations based on evolutionary models"/>
</dbReference>
<dbReference type="PhylomeDB" id="Q86YQ8"/>
<dbReference type="TreeFam" id="TF316419"/>
<dbReference type="PathwayCommons" id="Q86YQ8"/>
<dbReference type="Reactome" id="R-HSA-9013148">
    <property type="pathway name" value="CDC42 GTPase cycle"/>
</dbReference>
<dbReference type="Reactome" id="R-HSA-9013405">
    <property type="pathway name" value="RHOD GTPase cycle"/>
</dbReference>
<dbReference type="Reactome" id="R-HSA-9013406">
    <property type="pathway name" value="RHOQ GTPase cycle"/>
</dbReference>
<dbReference type="Reactome" id="R-HSA-9013409">
    <property type="pathway name" value="RHOJ GTPase cycle"/>
</dbReference>
<dbReference type="SignaLink" id="Q86YQ8"/>
<dbReference type="BioGRID-ORCS" id="144402">
    <property type="hits" value="14 hits in 1143 CRISPR screens"/>
</dbReference>
<dbReference type="ChiTaRS" id="CPNE8">
    <property type="organism name" value="human"/>
</dbReference>
<dbReference type="GeneWiki" id="CPNE8"/>
<dbReference type="GenomeRNAi" id="144402"/>
<dbReference type="Pharos" id="Q86YQ8">
    <property type="development level" value="Tbio"/>
</dbReference>
<dbReference type="PRO" id="PR:Q86YQ8"/>
<dbReference type="Proteomes" id="UP000005640">
    <property type="component" value="Chromosome 12"/>
</dbReference>
<dbReference type="RNAct" id="Q86YQ8">
    <property type="molecule type" value="protein"/>
</dbReference>
<dbReference type="Bgee" id="ENSG00000139117">
    <property type="expression patterns" value="Expressed in epithelial cell of pancreas and 166 other cell types or tissues"/>
</dbReference>
<dbReference type="ExpressionAtlas" id="Q86YQ8">
    <property type="expression patterns" value="baseline and differential"/>
</dbReference>
<dbReference type="GO" id="GO:0070062">
    <property type="term" value="C:extracellular exosome"/>
    <property type="evidence" value="ECO:0007005"/>
    <property type="project" value="UniProtKB"/>
</dbReference>
<dbReference type="GO" id="GO:0005886">
    <property type="term" value="C:plasma membrane"/>
    <property type="evidence" value="ECO:0000318"/>
    <property type="project" value="GO_Central"/>
</dbReference>
<dbReference type="GO" id="GO:0005544">
    <property type="term" value="F:calcium-dependent phospholipid binding"/>
    <property type="evidence" value="ECO:0000318"/>
    <property type="project" value="GO_Central"/>
</dbReference>
<dbReference type="GO" id="GO:0046872">
    <property type="term" value="F:metal ion binding"/>
    <property type="evidence" value="ECO:0007669"/>
    <property type="project" value="UniProtKB-KW"/>
</dbReference>
<dbReference type="GO" id="GO:0071277">
    <property type="term" value="P:cellular response to calcium ion"/>
    <property type="evidence" value="ECO:0000318"/>
    <property type="project" value="GO_Central"/>
</dbReference>
<dbReference type="CDD" id="cd04048">
    <property type="entry name" value="C2A_Copine"/>
    <property type="match status" value="1"/>
</dbReference>
<dbReference type="CDD" id="cd04047">
    <property type="entry name" value="C2B_Copine"/>
    <property type="match status" value="1"/>
</dbReference>
<dbReference type="CDD" id="cd01459">
    <property type="entry name" value="vWA_copine_like"/>
    <property type="match status" value="1"/>
</dbReference>
<dbReference type="FunFam" id="2.60.40.150:FF:000071">
    <property type="entry name" value="Copine 8"/>
    <property type="match status" value="1"/>
</dbReference>
<dbReference type="FunFam" id="2.60.40.150:FF:000013">
    <property type="entry name" value="copine-9 isoform X1"/>
    <property type="match status" value="1"/>
</dbReference>
<dbReference type="Gene3D" id="2.60.40.150">
    <property type="entry name" value="C2 domain"/>
    <property type="match status" value="2"/>
</dbReference>
<dbReference type="InterPro" id="IPR000008">
    <property type="entry name" value="C2_dom"/>
</dbReference>
<dbReference type="InterPro" id="IPR035892">
    <property type="entry name" value="C2_domain_sf"/>
</dbReference>
<dbReference type="InterPro" id="IPR037768">
    <property type="entry name" value="C2B_Copine"/>
</dbReference>
<dbReference type="InterPro" id="IPR045052">
    <property type="entry name" value="Copine"/>
</dbReference>
<dbReference type="InterPro" id="IPR010734">
    <property type="entry name" value="Copine_C"/>
</dbReference>
<dbReference type="InterPro" id="IPR002035">
    <property type="entry name" value="VWF_A"/>
</dbReference>
<dbReference type="InterPro" id="IPR036465">
    <property type="entry name" value="vWFA_dom_sf"/>
</dbReference>
<dbReference type="PANTHER" id="PTHR10857">
    <property type="entry name" value="COPINE"/>
    <property type="match status" value="1"/>
</dbReference>
<dbReference type="PANTHER" id="PTHR10857:SF133">
    <property type="entry name" value="COPINE-8"/>
    <property type="match status" value="1"/>
</dbReference>
<dbReference type="Pfam" id="PF00168">
    <property type="entry name" value="C2"/>
    <property type="match status" value="2"/>
</dbReference>
<dbReference type="Pfam" id="PF07002">
    <property type="entry name" value="Copine"/>
    <property type="match status" value="1"/>
</dbReference>
<dbReference type="SMART" id="SM00239">
    <property type="entry name" value="C2"/>
    <property type="match status" value="2"/>
</dbReference>
<dbReference type="SMART" id="SM00327">
    <property type="entry name" value="VWA"/>
    <property type="match status" value="1"/>
</dbReference>
<dbReference type="SUPFAM" id="SSF49562">
    <property type="entry name" value="C2 domain (Calcium/lipid-binding domain, CaLB)"/>
    <property type="match status" value="2"/>
</dbReference>
<dbReference type="SUPFAM" id="SSF53300">
    <property type="entry name" value="vWA-like"/>
    <property type="match status" value="1"/>
</dbReference>
<dbReference type="PROSITE" id="PS50004">
    <property type="entry name" value="C2"/>
    <property type="match status" value="2"/>
</dbReference>
<dbReference type="PROSITE" id="PS50234">
    <property type="entry name" value="VWFA"/>
    <property type="match status" value="1"/>
</dbReference>
<proteinExistence type="evidence at protein level"/>
<evidence type="ECO:0000250" key="1">
    <source>
        <dbReference type="UniProtKB" id="Q99829"/>
    </source>
</evidence>
<evidence type="ECO:0000255" key="2">
    <source>
        <dbReference type="PROSITE-ProRule" id="PRU00041"/>
    </source>
</evidence>
<evidence type="ECO:0000255" key="3">
    <source>
        <dbReference type="PROSITE-ProRule" id="PRU00219"/>
    </source>
</evidence>
<evidence type="ECO:0000303" key="4">
    <source>
    </source>
</evidence>
<evidence type="ECO:0000303" key="5">
    <source>
    </source>
</evidence>
<evidence type="ECO:0000305" key="6"/>
<evidence type="ECO:0000312" key="7">
    <source>
        <dbReference type="HGNC" id="HGNC:23498"/>
    </source>
</evidence>
<evidence type="ECO:0007744" key="8">
    <source>
    </source>
</evidence>
<feature type="chain" id="PRO_0000144849" description="Copine-8">
    <location>
        <begin position="1"/>
        <end position="564"/>
    </location>
</feature>
<feature type="domain" description="C2 1" evidence="2">
    <location>
        <begin position="1"/>
        <end position="133"/>
    </location>
</feature>
<feature type="domain" description="C2 2" evidence="2">
    <location>
        <begin position="142"/>
        <end position="265"/>
    </location>
</feature>
<feature type="domain" description="VWFA" evidence="3">
    <location>
        <begin position="309"/>
        <end position="510"/>
    </location>
</feature>
<feature type="binding site" evidence="2">
    <location>
        <position position="39"/>
    </location>
    <ligand>
        <name>Ca(2+)</name>
        <dbReference type="ChEBI" id="CHEBI:29108"/>
        <label>1</label>
    </ligand>
</feature>
<feature type="binding site" evidence="2">
    <location>
        <position position="39"/>
    </location>
    <ligand>
        <name>Ca(2+)</name>
        <dbReference type="ChEBI" id="CHEBI:29108"/>
        <label>2</label>
    </ligand>
</feature>
<feature type="binding site" evidence="2">
    <location>
        <position position="45"/>
    </location>
    <ligand>
        <name>Ca(2+)</name>
        <dbReference type="ChEBI" id="CHEBI:29108"/>
        <label>1</label>
    </ligand>
</feature>
<feature type="binding site" evidence="2">
    <location>
        <position position="99"/>
    </location>
    <ligand>
        <name>Ca(2+)</name>
        <dbReference type="ChEBI" id="CHEBI:29108"/>
        <label>1</label>
    </ligand>
</feature>
<feature type="binding site" evidence="2">
    <location>
        <position position="99"/>
    </location>
    <ligand>
        <name>Ca(2+)</name>
        <dbReference type="ChEBI" id="CHEBI:29108"/>
        <label>2</label>
    </ligand>
</feature>
<feature type="binding site" evidence="2">
    <location>
        <position position="101"/>
    </location>
    <ligand>
        <name>Ca(2+)</name>
        <dbReference type="ChEBI" id="CHEBI:29108"/>
        <label>1</label>
    </ligand>
</feature>
<feature type="binding site" evidence="2">
    <location>
        <position position="101"/>
    </location>
    <ligand>
        <name>Ca(2+)</name>
        <dbReference type="ChEBI" id="CHEBI:29108"/>
        <label>2</label>
    </ligand>
</feature>
<feature type="binding site" evidence="2">
    <location>
        <position position="101"/>
    </location>
    <ligand>
        <name>Ca(2+)</name>
        <dbReference type="ChEBI" id="CHEBI:29108"/>
        <label>3</label>
    </ligand>
</feature>
<feature type="binding site" evidence="2">
    <location>
        <position position="104"/>
    </location>
    <ligand>
        <name>Ca(2+)</name>
        <dbReference type="ChEBI" id="CHEBI:29108"/>
        <label>3</label>
    </ligand>
</feature>
<feature type="binding site" evidence="2">
    <location>
        <position position="109"/>
    </location>
    <ligand>
        <name>Ca(2+)</name>
        <dbReference type="ChEBI" id="CHEBI:29108"/>
        <label>3</label>
    </ligand>
</feature>
<feature type="binding site" evidence="2">
    <location>
        <position position="111"/>
    </location>
    <ligand>
        <name>Ca(2+)</name>
        <dbReference type="ChEBI" id="CHEBI:29108"/>
        <label>2</label>
    </ligand>
</feature>
<feature type="binding site" evidence="2">
    <location>
        <position position="111"/>
    </location>
    <ligand>
        <name>Ca(2+)</name>
        <dbReference type="ChEBI" id="CHEBI:29108"/>
        <label>3</label>
    </ligand>
</feature>
<feature type="binding site" evidence="2">
    <location>
        <position position="173"/>
    </location>
    <ligand>
        <name>Ca(2+)</name>
        <dbReference type="ChEBI" id="CHEBI:29108"/>
        <label>4</label>
    </ligand>
</feature>
<feature type="binding site" evidence="2">
    <location>
        <position position="173"/>
    </location>
    <ligand>
        <name>Ca(2+)</name>
        <dbReference type="ChEBI" id="CHEBI:29108"/>
        <label>5</label>
    </ligand>
</feature>
<feature type="binding site" evidence="2">
    <location>
        <position position="179"/>
    </location>
    <ligand>
        <name>Ca(2+)</name>
        <dbReference type="ChEBI" id="CHEBI:29108"/>
        <label>4</label>
    </ligand>
</feature>
<feature type="binding site" evidence="2">
    <location>
        <position position="235"/>
    </location>
    <ligand>
        <name>Ca(2+)</name>
        <dbReference type="ChEBI" id="CHEBI:29108"/>
        <label>4</label>
    </ligand>
</feature>
<feature type="binding site" evidence="2">
    <location>
        <position position="235"/>
    </location>
    <ligand>
        <name>Ca(2+)</name>
        <dbReference type="ChEBI" id="CHEBI:29108"/>
        <label>5</label>
    </ligand>
</feature>
<feature type="binding site" evidence="2">
    <location>
        <position position="237"/>
    </location>
    <ligand>
        <name>Ca(2+)</name>
        <dbReference type="ChEBI" id="CHEBI:29108"/>
        <label>4</label>
    </ligand>
</feature>
<feature type="binding site" evidence="2">
    <location>
        <position position="237"/>
    </location>
    <ligand>
        <name>Ca(2+)</name>
        <dbReference type="ChEBI" id="CHEBI:29108"/>
        <label>5</label>
    </ligand>
</feature>
<feature type="binding site" evidence="2">
    <location>
        <position position="243"/>
    </location>
    <ligand>
        <name>Ca(2+)</name>
        <dbReference type="ChEBI" id="CHEBI:29108"/>
        <label>5</label>
    </ligand>
</feature>
<feature type="modified residue" description="Phosphoserine" evidence="8">
    <location>
        <position position="260"/>
    </location>
</feature>
<feature type="splice variant" id="VSP_056287" description="In isoform 2." evidence="4 5">
    <location>
        <begin position="1"/>
        <end position="331"/>
    </location>
</feature>
<feature type="sequence conflict" description="In Ref. 1; AAO21123." evidence="6" ref="1">
    <original>V</original>
    <variation>I</variation>
    <location>
        <position position="445"/>
    </location>
</feature>
<accession>Q86YQ8</accession>
<accession>Q2TB41</accession>
<accession>Q86VY2</accession>
<keyword id="KW-0025">Alternative splicing</keyword>
<keyword id="KW-0106">Calcium</keyword>
<keyword id="KW-0479">Metal-binding</keyword>
<keyword id="KW-0597">Phosphoprotein</keyword>
<keyword id="KW-1267">Proteomics identification</keyword>
<keyword id="KW-1185">Reference proteome</keyword>
<keyword id="KW-0677">Repeat</keyword>
<reference key="1">
    <citation type="submission" date="2002-11" db="EMBL/GenBank/DDBJ databases">
        <authorList>
            <person name="Hromas R.A."/>
            <person name="Ramsey H."/>
            <person name="Richkind K."/>
        </authorList>
    </citation>
    <scope>NUCLEOTIDE SEQUENCE [MRNA] (ISOFORM 1)</scope>
</reference>
<reference key="2">
    <citation type="journal article" date="2004" name="Nat. Genet.">
        <title>Complete sequencing and characterization of 21,243 full-length human cDNAs.</title>
        <authorList>
            <person name="Ota T."/>
            <person name="Suzuki Y."/>
            <person name="Nishikawa T."/>
            <person name="Otsuki T."/>
            <person name="Sugiyama T."/>
            <person name="Irie R."/>
            <person name="Wakamatsu A."/>
            <person name="Hayashi K."/>
            <person name="Sato H."/>
            <person name="Nagai K."/>
            <person name="Kimura K."/>
            <person name="Makita H."/>
            <person name="Sekine M."/>
            <person name="Obayashi M."/>
            <person name="Nishi T."/>
            <person name="Shibahara T."/>
            <person name="Tanaka T."/>
            <person name="Ishii S."/>
            <person name="Yamamoto J."/>
            <person name="Saito K."/>
            <person name="Kawai Y."/>
            <person name="Isono Y."/>
            <person name="Nakamura Y."/>
            <person name="Nagahari K."/>
            <person name="Murakami K."/>
            <person name="Yasuda T."/>
            <person name="Iwayanagi T."/>
            <person name="Wagatsuma M."/>
            <person name="Shiratori A."/>
            <person name="Sudo H."/>
            <person name="Hosoiri T."/>
            <person name="Kaku Y."/>
            <person name="Kodaira H."/>
            <person name="Kondo H."/>
            <person name="Sugawara M."/>
            <person name="Takahashi M."/>
            <person name="Kanda K."/>
            <person name="Yokoi T."/>
            <person name="Furuya T."/>
            <person name="Kikkawa E."/>
            <person name="Omura Y."/>
            <person name="Abe K."/>
            <person name="Kamihara K."/>
            <person name="Katsuta N."/>
            <person name="Sato K."/>
            <person name="Tanikawa M."/>
            <person name="Yamazaki M."/>
            <person name="Ninomiya K."/>
            <person name="Ishibashi T."/>
            <person name="Yamashita H."/>
            <person name="Murakawa K."/>
            <person name="Fujimori K."/>
            <person name="Tanai H."/>
            <person name="Kimata M."/>
            <person name="Watanabe M."/>
            <person name="Hiraoka S."/>
            <person name="Chiba Y."/>
            <person name="Ishida S."/>
            <person name="Ono Y."/>
            <person name="Takiguchi S."/>
            <person name="Watanabe S."/>
            <person name="Yosida M."/>
            <person name="Hotuta T."/>
            <person name="Kusano J."/>
            <person name="Kanehori K."/>
            <person name="Takahashi-Fujii A."/>
            <person name="Hara H."/>
            <person name="Tanase T.-O."/>
            <person name="Nomura Y."/>
            <person name="Togiya S."/>
            <person name="Komai F."/>
            <person name="Hara R."/>
            <person name="Takeuchi K."/>
            <person name="Arita M."/>
            <person name="Imose N."/>
            <person name="Musashino K."/>
            <person name="Yuuki H."/>
            <person name="Oshima A."/>
            <person name="Sasaki N."/>
            <person name="Aotsuka S."/>
            <person name="Yoshikawa Y."/>
            <person name="Matsunawa H."/>
            <person name="Ichihara T."/>
            <person name="Shiohata N."/>
            <person name="Sano S."/>
            <person name="Moriya S."/>
            <person name="Momiyama H."/>
            <person name="Satoh N."/>
            <person name="Takami S."/>
            <person name="Terashima Y."/>
            <person name="Suzuki O."/>
            <person name="Nakagawa S."/>
            <person name="Senoh A."/>
            <person name="Mizoguchi H."/>
            <person name="Goto Y."/>
            <person name="Shimizu F."/>
            <person name="Wakebe H."/>
            <person name="Hishigaki H."/>
            <person name="Watanabe T."/>
            <person name="Sugiyama A."/>
            <person name="Takemoto M."/>
            <person name="Kawakami B."/>
            <person name="Yamazaki M."/>
            <person name="Watanabe K."/>
            <person name="Kumagai A."/>
            <person name="Itakura S."/>
            <person name="Fukuzumi Y."/>
            <person name="Fujimori Y."/>
            <person name="Komiyama M."/>
            <person name="Tashiro H."/>
            <person name="Tanigami A."/>
            <person name="Fujiwara T."/>
            <person name="Ono T."/>
            <person name="Yamada K."/>
            <person name="Fujii Y."/>
            <person name="Ozaki K."/>
            <person name="Hirao M."/>
            <person name="Ohmori Y."/>
            <person name="Kawabata A."/>
            <person name="Hikiji T."/>
            <person name="Kobatake N."/>
            <person name="Inagaki H."/>
            <person name="Ikema Y."/>
            <person name="Okamoto S."/>
            <person name="Okitani R."/>
            <person name="Kawakami T."/>
            <person name="Noguchi S."/>
            <person name="Itoh T."/>
            <person name="Shigeta K."/>
            <person name="Senba T."/>
            <person name="Matsumura K."/>
            <person name="Nakajima Y."/>
            <person name="Mizuno T."/>
            <person name="Morinaga M."/>
            <person name="Sasaki M."/>
            <person name="Togashi T."/>
            <person name="Oyama M."/>
            <person name="Hata H."/>
            <person name="Watanabe M."/>
            <person name="Komatsu T."/>
            <person name="Mizushima-Sugano J."/>
            <person name="Satoh T."/>
            <person name="Shirai Y."/>
            <person name="Takahashi Y."/>
            <person name="Nakagawa K."/>
            <person name="Okumura K."/>
            <person name="Nagase T."/>
            <person name="Nomura N."/>
            <person name="Kikuchi H."/>
            <person name="Masuho Y."/>
            <person name="Yamashita R."/>
            <person name="Nakai K."/>
            <person name="Yada T."/>
            <person name="Nakamura Y."/>
            <person name="Ohara O."/>
            <person name="Isogai T."/>
            <person name="Sugano S."/>
        </authorList>
    </citation>
    <scope>NUCLEOTIDE SEQUENCE [LARGE SCALE MRNA] (ISOFORM 2)</scope>
    <source>
        <tissue>Hippocampus</tissue>
    </source>
</reference>
<reference key="3">
    <citation type="journal article" date="2006" name="Nature">
        <title>The finished DNA sequence of human chromosome 12.</title>
        <authorList>
            <person name="Scherer S.E."/>
            <person name="Muzny D.M."/>
            <person name="Buhay C.J."/>
            <person name="Chen R."/>
            <person name="Cree A."/>
            <person name="Ding Y."/>
            <person name="Dugan-Rocha S."/>
            <person name="Gill R."/>
            <person name="Gunaratne P."/>
            <person name="Harris R.A."/>
            <person name="Hawes A.C."/>
            <person name="Hernandez J."/>
            <person name="Hodgson A.V."/>
            <person name="Hume J."/>
            <person name="Jackson A."/>
            <person name="Khan Z.M."/>
            <person name="Kovar-Smith C."/>
            <person name="Lewis L.R."/>
            <person name="Lozado R.J."/>
            <person name="Metzker M.L."/>
            <person name="Milosavljevic A."/>
            <person name="Miner G.R."/>
            <person name="Montgomery K.T."/>
            <person name="Morgan M.B."/>
            <person name="Nazareth L.V."/>
            <person name="Scott G."/>
            <person name="Sodergren E."/>
            <person name="Song X.-Z."/>
            <person name="Steffen D."/>
            <person name="Lovering R.C."/>
            <person name="Wheeler D.A."/>
            <person name="Worley K.C."/>
            <person name="Yuan Y."/>
            <person name="Zhang Z."/>
            <person name="Adams C.Q."/>
            <person name="Ansari-Lari M.A."/>
            <person name="Ayele M."/>
            <person name="Brown M.J."/>
            <person name="Chen G."/>
            <person name="Chen Z."/>
            <person name="Clerc-Blankenburg K.P."/>
            <person name="Davis C."/>
            <person name="Delgado O."/>
            <person name="Dinh H.H."/>
            <person name="Draper H."/>
            <person name="Gonzalez-Garay M.L."/>
            <person name="Havlak P."/>
            <person name="Jackson L.R."/>
            <person name="Jacob L.S."/>
            <person name="Kelly S.H."/>
            <person name="Li L."/>
            <person name="Li Z."/>
            <person name="Liu J."/>
            <person name="Liu W."/>
            <person name="Lu J."/>
            <person name="Maheshwari M."/>
            <person name="Nguyen B.-V."/>
            <person name="Okwuonu G.O."/>
            <person name="Pasternak S."/>
            <person name="Perez L.M."/>
            <person name="Plopper F.J.H."/>
            <person name="Santibanez J."/>
            <person name="Shen H."/>
            <person name="Tabor P.E."/>
            <person name="Verduzco D."/>
            <person name="Waldron L."/>
            <person name="Wang Q."/>
            <person name="Williams G.A."/>
            <person name="Zhang J."/>
            <person name="Zhou J."/>
            <person name="Allen C.C."/>
            <person name="Amin A.G."/>
            <person name="Anyalebechi V."/>
            <person name="Bailey M."/>
            <person name="Barbaria J.A."/>
            <person name="Bimage K.E."/>
            <person name="Bryant N.P."/>
            <person name="Burch P.E."/>
            <person name="Burkett C.E."/>
            <person name="Burrell K.L."/>
            <person name="Calderon E."/>
            <person name="Cardenas V."/>
            <person name="Carter K."/>
            <person name="Casias K."/>
            <person name="Cavazos I."/>
            <person name="Cavazos S.R."/>
            <person name="Ceasar H."/>
            <person name="Chacko J."/>
            <person name="Chan S.N."/>
            <person name="Chavez D."/>
            <person name="Christopoulos C."/>
            <person name="Chu J."/>
            <person name="Cockrell R."/>
            <person name="Cox C.D."/>
            <person name="Dang M."/>
            <person name="Dathorne S.R."/>
            <person name="David R."/>
            <person name="Davis C.M."/>
            <person name="Davy-Carroll L."/>
            <person name="Deshazo D.R."/>
            <person name="Donlin J.E."/>
            <person name="D'Souza L."/>
            <person name="Eaves K.A."/>
            <person name="Egan A."/>
            <person name="Emery-Cohen A.J."/>
            <person name="Escotto M."/>
            <person name="Flagg N."/>
            <person name="Forbes L.D."/>
            <person name="Gabisi A.M."/>
            <person name="Garza M."/>
            <person name="Hamilton C."/>
            <person name="Henderson N."/>
            <person name="Hernandez O."/>
            <person name="Hines S."/>
            <person name="Hogues M.E."/>
            <person name="Huang M."/>
            <person name="Idlebird D.G."/>
            <person name="Johnson R."/>
            <person name="Jolivet A."/>
            <person name="Jones S."/>
            <person name="Kagan R."/>
            <person name="King L.M."/>
            <person name="Leal B."/>
            <person name="Lebow H."/>
            <person name="Lee S."/>
            <person name="LeVan J.M."/>
            <person name="Lewis L.C."/>
            <person name="London P."/>
            <person name="Lorensuhewa L.M."/>
            <person name="Loulseged H."/>
            <person name="Lovett D.A."/>
            <person name="Lucier A."/>
            <person name="Lucier R.L."/>
            <person name="Ma J."/>
            <person name="Madu R.C."/>
            <person name="Mapua P."/>
            <person name="Martindale A.D."/>
            <person name="Martinez E."/>
            <person name="Massey E."/>
            <person name="Mawhiney S."/>
            <person name="Meador M.G."/>
            <person name="Mendez S."/>
            <person name="Mercado C."/>
            <person name="Mercado I.C."/>
            <person name="Merritt C.E."/>
            <person name="Miner Z.L."/>
            <person name="Minja E."/>
            <person name="Mitchell T."/>
            <person name="Mohabbat F."/>
            <person name="Mohabbat K."/>
            <person name="Montgomery B."/>
            <person name="Moore N."/>
            <person name="Morris S."/>
            <person name="Munidasa M."/>
            <person name="Ngo R.N."/>
            <person name="Nguyen N.B."/>
            <person name="Nickerson E."/>
            <person name="Nwaokelemeh O.O."/>
            <person name="Nwokenkwo S."/>
            <person name="Obregon M."/>
            <person name="Oguh M."/>
            <person name="Oragunye N."/>
            <person name="Oviedo R.J."/>
            <person name="Parish B.J."/>
            <person name="Parker D.N."/>
            <person name="Parrish J."/>
            <person name="Parks K.L."/>
            <person name="Paul H.A."/>
            <person name="Payton B.A."/>
            <person name="Perez A."/>
            <person name="Perrin W."/>
            <person name="Pickens A."/>
            <person name="Primus E.L."/>
            <person name="Pu L.-L."/>
            <person name="Puazo M."/>
            <person name="Quiles M.M."/>
            <person name="Quiroz J.B."/>
            <person name="Rabata D."/>
            <person name="Reeves K."/>
            <person name="Ruiz S.J."/>
            <person name="Shao H."/>
            <person name="Sisson I."/>
            <person name="Sonaike T."/>
            <person name="Sorelle R.P."/>
            <person name="Sutton A.E."/>
            <person name="Svatek A.F."/>
            <person name="Svetz L.A."/>
            <person name="Tamerisa K.S."/>
            <person name="Taylor T.R."/>
            <person name="Teague B."/>
            <person name="Thomas N."/>
            <person name="Thorn R.D."/>
            <person name="Trejos Z.Y."/>
            <person name="Trevino B.K."/>
            <person name="Ukegbu O.N."/>
            <person name="Urban J.B."/>
            <person name="Vasquez L.I."/>
            <person name="Vera V.A."/>
            <person name="Villasana D.M."/>
            <person name="Wang L."/>
            <person name="Ward-Moore S."/>
            <person name="Warren J.T."/>
            <person name="Wei X."/>
            <person name="White F."/>
            <person name="Williamson A.L."/>
            <person name="Wleczyk R."/>
            <person name="Wooden H.S."/>
            <person name="Wooden S.H."/>
            <person name="Yen J."/>
            <person name="Yoon L."/>
            <person name="Yoon V."/>
            <person name="Zorrilla S.E."/>
            <person name="Nelson D."/>
            <person name="Kucherlapati R."/>
            <person name="Weinstock G."/>
            <person name="Gibbs R.A."/>
        </authorList>
    </citation>
    <scope>NUCLEOTIDE SEQUENCE [LARGE SCALE GENOMIC DNA]</scope>
</reference>
<reference key="4">
    <citation type="journal article" date="2004" name="Genome Res.">
        <title>The status, quality, and expansion of the NIH full-length cDNA project: the Mammalian Gene Collection (MGC).</title>
        <authorList>
            <consortium name="The MGC Project Team"/>
        </authorList>
    </citation>
    <scope>NUCLEOTIDE SEQUENCE [LARGE SCALE MRNA] (ISOFORMS 1 AND 2)</scope>
    <source>
        <tissue>Brain</tissue>
    </source>
</reference>
<reference key="5">
    <citation type="journal article" date="2007" name="Science">
        <title>ATM and ATR substrate analysis reveals extensive protein networks responsive to DNA damage.</title>
        <authorList>
            <person name="Matsuoka S."/>
            <person name="Ballif B.A."/>
            <person name="Smogorzewska A."/>
            <person name="McDonald E.R. III"/>
            <person name="Hurov K.E."/>
            <person name="Luo J."/>
            <person name="Bakalarski C.E."/>
            <person name="Zhao Z."/>
            <person name="Solimini N."/>
            <person name="Lerenthal Y."/>
            <person name="Shiloh Y."/>
            <person name="Gygi S.P."/>
            <person name="Elledge S.J."/>
        </authorList>
    </citation>
    <scope>PHOSPHORYLATION [LARGE SCALE ANALYSIS] AT SER-260</scope>
    <scope>IDENTIFICATION BY MASS SPECTROMETRY [LARGE SCALE ANALYSIS]</scope>
    <source>
        <tissue>Embryonic kidney</tissue>
    </source>
</reference>
<reference key="6">
    <citation type="journal article" date="2008" name="Proc. Natl. Acad. Sci. U.S.A.">
        <title>A quantitative atlas of mitotic phosphorylation.</title>
        <authorList>
            <person name="Dephoure N."/>
            <person name="Zhou C."/>
            <person name="Villen J."/>
            <person name="Beausoleil S.A."/>
            <person name="Bakalarski C.E."/>
            <person name="Elledge S.J."/>
            <person name="Gygi S.P."/>
        </authorList>
    </citation>
    <scope>IDENTIFICATION BY MASS SPECTROMETRY [LARGE SCALE ANALYSIS]</scope>
    <source>
        <tissue>Cervix carcinoma</tissue>
    </source>
</reference>
<comment type="function">
    <text evidence="1">Probable calcium-dependent phospholipid-binding protein that may play a role in calcium-mediated intracellular processes.</text>
</comment>
<comment type="cofactor">
    <cofactor evidence="2">
        <name>Ca(2+)</name>
        <dbReference type="ChEBI" id="CHEBI:29108"/>
    </cofactor>
    <text evidence="2">Binds 3 Ca(2+) ions per C2 domain.</text>
</comment>
<comment type="interaction">
    <interactant intactId="EBI-1642325">
        <id>Q86YQ8</id>
    </interactant>
    <interactant intactId="EBI-11956853">
        <id>Q8N987</id>
        <label>NECAB1</label>
    </interactant>
    <organismsDiffer>false</organismsDiffer>
    <experiments>3</experiments>
</comment>
<comment type="interaction">
    <interactant intactId="EBI-1642325">
        <id>Q86YQ8</id>
    </interactant>
    <interactant intactId="EBI-741237">
        <id>O60504</id>
        <label>SORBS3</label>
    </interactant>
    <organismsDiffer>false</organismsDiffer>
    <experiments>3</experiments>
</comment>
<comment type="interaction">
    <interactant intactId="EBI-25891175">
        <id>Q86YQ8-2</id>
    </interactant>
    <interactant intactId="EBI-458391">
        <id>P04271</id>
        <label>S100B</label>
    </interactant>
    <organismsDiffer>false</organismsDiffer>
    <experiments>3</experiments>
</comment>
<comment type="interaction">
    <interactant intactId="EBI-25891175">
        <id>Q86YQ8-2</id>
    </interactant>
    <interactant intactId="EBI-25892332">
        <id>P43405-2</id>
        <label>SYK</label>
    </interactant>
    <organismsDiffer>false</organismsDiffer>
    <experiments>3</experiments>
</comment>
<comment type="alternative products">
    <event type="alternative splicing"/>
    <isoform>
        <id>Q86YQ8-1</id>
        <name>1</name>
        <sequence type="displayed"/>
    </isoform>
    <isoform>
        <id>Q86YQ8-2</id>
        <name>2</name>
        <sequence type="described" ref="VSP_056287"/>
    </isoform>
</comment>
<comment type="similarity">
    <text evidence="6">Belongs to the copine family.</text>
</comment>
<organism>
    <name type="scientific">Homo sapiens</name>
    <name type="common">Human</name>
    <dbReference type="NCBI Taxonomy" id="9606"/>
    <lineage>
        <taxon>Eukaryota</taxon>
        <taxon>Metazoa</taxon>
        <taxon>Chordata</taxon>
        <taxon>Craniata</taxon>
        <taxon>Vertebrata</taxon>
        <taxon>Euteleostomi</taxon>
        <taxon>Mammalia</taxon>
        <taxon>Eutheria</taxon>
        <taxon>Euarchontoglires</taxon>
        <taxon>Primates</taxon>
        <taxon>Haplorrhini</taxon>
        <taxon>Catarrhini</taxon>
        <taxon>Hominidae</taxon>
        <taxon>Homo</taxon>
    </lineage>
</organism>
<protein>
    <recommendedName>
        <fullName evidence="6">Copine-8</fullName>
    </recommendedName>
    <alternativeName>
        <fullName evidence="7">Copine VIII</fullName>
    </alternativeName>
</protein>
<gene>
    <name evidence="7" type="primary">CPNE8</name>
</gene>
<sequence>MDSRYNSTAGIGDLNQLSAAIPATRVEVSVSCRNLLDRDTFSKSDPICVLYVQGVGNKEWREFGRTEVIDNTLNPDFVRKFILDYFFEERENLRFDLYDVDSKSPNLSKHDFLGQVFCTLGEIVGSQGSRLEKPIVGIPGKKCGTIILTAEELNCCRDAVLMQFCANKLDKKDFFGKSDPFLVFYRSNEDGSFTICHKTEVVKNTLNPVWQAFKISVRALCNGDYDRTIKVEVYDWDRDGSHDFIGEFTTSYRELSRGQSQFNVYEVVNPKKKGKKKKYTNSGTVTLLSFLVETEVSFLDYIKGGTQINFTVAIDFTASNGNPAQPTSLHYMNPYQLNAYGMALKAVGEIVQDYDSDKMFPALGFGAKLPPDGRISHEFALNGNPQNPYCDGIEGVMEAYYRSLKSVQLYGPTNFAPVINHVARYASSVKDGSQYFVLLIVTDGVISDMAQTKESIVNASKLPMSIIIVGVGPAEFDAMVELDGDDVRVSSRGKYAERDIVQFVPFRDYIDRSGNHILSMARLAKDVLAEIPEQFLSYMRARGIKPSPAPPPYTPPTHVLQTQI</sequence>